<reference key="1">
    <citation type="journal article" date="2015" name="Proc. Natl. Acad. Sci. U.S.A.">
        <title>Trichodesmium genome maintains abundant, widespread noncoding DNA in situ, despite oligotrophic lifestyle.</title>
        <authorList>
            <person name="Walworth N."/>
            <person name="Pfreundt U."/>
            <person name="Nelson W.C."/>
            <person name="Mincer T."/>
            <person name="Heidelberg J.F."/>
            <person name="Fu F."/>
            <person name="Waterbury J.B."/>
            <person name="Glavina del Rio T."/>
            <person name="Goodwin L."/>
            <person name="Kyrpides N.C."/>
            <person name="Land M.L."/>
            <person name="Woyke T."/>
            <person name="Hutchins D.A."/>
            <person name="Hess W.R."/>
            <person name="Webb E.A."/>
        </authorList>
    </citation>
    <scope>NUCLEOTIDE SEQUENCE [LARGE SCALE GENOMIC DNA]</scope>
    <source>
        <strain>IMS101</strain>
    </source>
</reference>
<dbReference type="EMBL" id="CP000393">
    <property type="protein sequence ID" value="ABG50332.1"/>
    <property type="molecule type" value="Genomic_DNA"/>
</dbReference>
<dbReference type="RefSeq" id="WP_011610722.1">
    <property type="nucleotide sequence ID" value="NC_008312.1"/>
</dbReference>
<dbReference type="KEGG" id="ter:Tery_0938"/>
<dbReference type="eggNOG" id="COG1615">
    <property type="taxonomic scope" value="Bacteria"/>
</dbReference>
<dbReference type="HOGENOM" id="CLU_007733_0_0_3"/>
<dbReference type="OrthoDB" id="9763654at2"/>
<dbReference type="GO" id="GO:0005576">
    <property type="term" value="C:extracellular region"/>
    <property type="evidence" value="ECO:0007669"/>
    <property type="project" value="TreeGrafter"/>
</dbReference>
<dbReference type="GO" id="GO:0005886">
    <property type="term" value="C:plasma membrane"/>
    <property type="evidence" value="ECO:0007669"/>
    <property type="project" value="UniProtKB-SubCell"/>
</dbReference>
<dbReference type="HAMAP" id="MF_01600">
    <property type="entry name" value="UPF0182"/>
    <property type="match status" value="1"/>
</dbReference>
<dbReference type="InterPro" id="IPR005372">
    <property type="entry name" value="UPF0182"/>
</dbReference>
<dbReference type="NCBIfam" id="NF002707">
    <property type="entry name" value="PRK02509.1"/>
    <property type="match status" value="1"/>
</dbReference>
<dbReference type="PANTHER" id="PTHR39344">
    <property type="entry name" value="UPF0182 PROTEIN SLL1060"/>
    <property type="match status" value="1"/>
</dbReference>
<dbReference type="PANTHER" id="PTHR39344:SF1">
    <property type="entry name" value="UPF0182 PROTEIN SLL1060"/>
    <property type="match status" value="1"/>
</dbReference>
<dbReference type="Pfam" id="PF03699">
    <property type="entry name" value="UPF0182"/>
    <property type="match status" value="1"/>
</dbReference>
<gene>
    <name type="ordered locus">Tery_0938</name>
</gene>
<sequence>MKIHIIYQLKCRLIKAFKRIKSIHILIILFFSFVCWEILGFSTNILADFLWFQELNYLPVLINKLQTETWLWITTFLISMGFFLVNLRLASFFKYSKKQVRITERSEEIMLIPPVTIPSSKLRIEPSLSLSWLLCCIFGLILLVGLILTHYIDVFTNYLYPDLTVANVSPQIPSEFNIESICKILTSILSNLWLLGLFLLLSFAIIINPILWLSVFAVVLSLVFSFILSSHWANILQLLHGTPFNKSEDLFHIDISFYVFQLPVLELLRFWLIGLFLYGFVACILIYLLSGKSLSQGNFYQFSQQQEKHLHGLGGGFILTIAFSYFIACFELLYSRRGVVYGAGYTDIKVQLPAYVFLGILALLIAFFLFWQAIFSVKSIQSYIEASLWFLRLGRKRKRKKKVIAKLFANSYSLRAILTWYLIIAVIAGWLIPKIVQMAIVQPNEIEREIPYIKRSITFTKEAYIDVDKLEVELFDPNNELTYDDLINNKLIIENIRLWDTRPILQTNRQLQQIRPYYEFINADIDRYTFLKKESERTKNNLTKKQQVIIAARELNYESVPQPAQTWVNEHLVYTHGYGFTLSPINQVEKNGLPEYFVKNIGPDPTLEKNSTLEVLNRIRDSIPIGKPRIYYGELTNTNIMTSTAQRNKELDYPSGEANSYNTYDGSGGIVIGQGWQRWIFAKYLKDWKMLLTNEFIPETKLLYRRNINARVRSIAPFLRYDHDPYLVVADPNFGHKNMNQKNPNYLYWIIDAYTTTNHYPYSDPENNEFNYIRNSVKVVIDAYNGSVKFYVADPKDPIIRTWKKAFSDMFNSIEEMPTSLYTHIRYPLDLFQVQSEVLSTYHMDDPRVFYNREDLWRVPIEIYGAQQQKVKPYYLITQLPTETSEEFILLLPYTPASRNNLIAWLAARSDGENYGKLLLYQFPKQRLIYGIEQIEALINQDPEISQQISLWNRQGSKAIKGNLLVIPINESLIYVEPIYLEAEQNSLPTLRRVIVSYKNRVVMKPTLDEALQEVFQIQ</sequence>
<evidence type="ECO:0000255" key="1">
    <source>
        <dbReference type="HAMAP-Rule" id="MF_01600"/>
    </source>
</evidence>
<name>Y938_TRIEI</name>
<proteinExistence type="inferred from homology"/>
<accession>Q117J2</accession>
<feature type="chain" id="PRO_0000291303" description="UPF0182 protein Tery_0938">
    <location>
        <begin position="1"/>
        <end position="1019"/>
    </location>
</feature>
<feature type="transmembrane region" description="Helical" evidence="1">
    <location>
        <begin position="23"/>
        <end position="43"/>
    </location>
</feature>
<feature type="transmembrane region" description="Helical" evidence="1">
    <location>
        <begin position="67"/>
        <end position="87"/>
    </location>
</feature>
<feature type="transmembrane region" description="Helical" evidence="1">
    <location>
        <begin position="128"/>
        <end position="148"/>
    </location>
</feature>
<feature type="transmembrane region" description="Helical" evidence="1">
    <location>
        <begin position="192"/>
        <end position="212"/>
    </location>
</feature>
<feature type="transmembrane region" description="Helical" evidence="1">
    <location>
        <begin position="213"/>
        <end position="233"/>
    </location>
</feature>
<feature type="transmembrane region" description="Helical" evidence="1">
    <location>
        <begin position="270"/>
        <end position="290"/>
    </location>
</feature>
<feature type="transmembrane region" description="Helical" evidence="1">
    <location>
        <begin position="313"/>
        <end position="333"/>
    </location>
</feature>
<feature type="transmembrane region" description="Helical" evidence="1">
    <location>
        <begin position="355"/>
        <end position="375"/>
    </location>
</feature>
<feature type="transmembrane region" description="Helical" evidence="1">
    <location>
        <begin position="416"/>
        <end position="436"/>
    </location>
</feature>
<protein>
    <recommendedName>
        <fullName evidence="1">UPF0182 protein Tery_0938</fullName>
    </recommendedName>
</protein>
<comment type="subcellular location">
    <subcellularLocation>
        <location evidence="1">Cell membrane</location>
        <topology evidence="1">Multi-pass membrane protein</topology>
    </subcellularLocation>
</comment>
<comment type="similarity">
    <text evidence="1">Belongs to the UPF0182 family.</text>
</comment>
<organism>
    <name type="scientific">Trichodesmium erythraeum (strain IMS101)</name>
    <dbReference type="NCBI Taxonomy" id="203124"/>
    <lineage>
        <taxon>Bacteria</taxon>
        <taxon>Bacillati</taxon>
        <taxon>Cyanobacteriota</taxon>
        <taxon>Cyanophyceae</taxon>
        <taxon>Oscillatoriophycideae</taxon>
        <taxon>Oscillatoriales</taxon>
        <taxon>Microcoleaceae</taxon>
        <taxon>Trichodesmium</taxon>
    </lineage>
</organism>
<keyword id="KW-1003">Cell membrane</keyword>
<keyword id="KW-0472">Membrane</keyword>
<keyword id="KW-0812">Transmembrane</keyword>
<keyword id="KW-1133">Transmembrane helix</keyword>